<evidence type="ECO:0000256" key="1">
    <source>
        <dbReference type="SAM" id="MobiDB-lite"/>
    </source>
</evidence>
<evidence type="ECO:0000269" key="2">
    <source>
    </source>
</evidence>
<evidence type="ECO:0000269" key="3">
    <source>
    </source>
</evidence>
<evidence type="ECO:0000269" key="4">
    <source>
    </source>
</evidence>
<evidence type="ECO:0000303" key="5">
    <source>
    </source>
</evidence>
<evidence type="ECO:0000303" key="6">
    <source>
    </source>
</evidence>
<evidence type="ECO:0000305" key="7"/>
<evidence type="ECO:0000305" key="8">
    <source>
    </source>
</evidence>
<evidence type="ECO:0000305" key="9">
    <source>
    </source>
</evidence>
<gene>
    <name evidence="5" type="primary">mpp</name>
    <name type="ORF">NCU06270</name>
</gene>
<keyword id="KW-0903">Direct protein sequencing</keyword>
<keyword id="KW-0496">Mitochondrion</keyword>
<keyword id="KW-1185">Reference proteome</keyword>
<keyword id="KW-0809">Transit peptide</keyword>
<organism>
    <name type="scientific">Neurospora crassa (strain ATCC 24698 / 74-OR23-1A / CBS 708.71 / DSM 1257 / FGSC 987)</name>
    <dbReference type="NCBI Taxonomy" id="367110"/>
    <lineage>
        <taxon>Eukaryota</taxon>
        <taxon>Fungi</taxon>
        <taxon>Dikarya</taxon>
        <taxon>Ascomycota</taxon>
        <taxon>Pezizomycotina</taxon>
        <taxon>Sordariomycetes</taxon>
        <taxon>Sordariomycetidae</taxon>
        <taxon>Sordariales</taxon>
        <taxon>Sordariaceae</taxon>
        <taxon>Neurospora</taxon>
    </lineage>
</organism>
<comment type="function">
    <text evidence="4 8">Substrate recognition and binding subunit of the essential mitochondrial processing protease (MPP), which cleaves the mitochondrial sequence off newly imported precursors proteins.</text>
</comment>
<comment type="subunit">
    <text evidence="3">Heterodimer of mpp (alpha) and pep (beta) subunits, forming the mitochondrial processing protease (MPP) in which mpp is involved in substrate recognition and binding and pep is the catalytic subunit.</text>
</comment>
<comment type="subcellular location">
    <subcellularLocation>
        <location evidence="3">Mitochondrion matrix</location>
    </subcellularLocation>
</comment>
<comment type="domain">
    <text>Appears to contain two domains of approximately equal size which are separated by a loop-like sequence.</text>
</comment>
<comment type="similarity">
    <text evidence="7">Belongs to the peptidase M16 family.</text>
</comment>
<comment type="caution">
    <text evidence="7 8 9">Was originally thought to be the catalytic subunit (PubMed:2967109). The low processing activity which was previously observed with alpha-MPP which has been immunoprecipitated from a mitochondrial extract is most likely due to contamination by the beta-subunit (PubMed:8106471). Does not seem to have protease activity as it lacks the zinc-binding site.</text>
</comment>
<dbReference type="EMBL" id="J05484">
    <property type="protein sequence ID" value="AAA33597.1"/>
    <property type="molecule type" value="mRNA"/>
</dbReference>
<dbReference type="EMBL" id="CM002238">
    <property type="protein sequence ID" value="EAA33638.1"/>
    <property type="molecule type" value="Genomic_DNA"/>
</dbReference>
<dbReference type="PIR" id="A36442">
    <property type="entry name" value="A36442"/>
</dbReference>
<dbReference type="RefSeq" id="XP_962874.1">
    <property type="nucleotide sequence ID" value="XM_957781.2"/>
</dbReference>
<dbReference type="SMR" id="P23955"/>
<dbReference type="FunCoup" id="P23955">
    <property type="interactions" value="1023"/>
</dbReference>
<dbReference type="STRING" id="367110.P23955"/>
<dbReference type="PaxDb" id="5141-EFNCRP00000005979"/>
<dbReference type="EnsemblFungi" id="EAA33638">
    <property type="protein sequence ID" value="EAA33638"/>
    <property type="gene ID" value="NCU06270"/>
</dbReference>
<dbReference type="GeneID" id="3879027"/>
<dbReference type="KEGG" id="ncr:NCU06270"/>
<dbReference type="VEuPathDB" id="FungiDB:NCU06270"/>
<dbReference type="HOGENOM" id="CLU_009902_5_2_1"/>
<dbReference type="InParanoid" id="P23955"/>
<dbReference type="OMA" id="LKYHHSP"/>
<dbReference type="OrthoDB" id="277191at2759"/>
<dbReference type="Proteomes" id="UP000001805">
    <property type="component" value="Chromosome 3, Linkage Group III"/>
</dbReference>
<dbReference type="GO" id="GO:0005759">
    <property type="term" value="C:mitochondrial matrix"/>
    <property type="evidence" value="ECO:0007669"/>
    <property type="project" value="UniProtKB-SubCell"/>
</dbReference>
<dbReference type="GO" id="GO:0005739">
    <property type="term" value="C:mitochondrion"/>
    <property type="evidence" value="ECO:0000318"/>
    <property type="project" value="GO_Central"/>
</dbReference>
<dbReference type="GO" id="GO:0046872">
    <property type="term" value="F:metal ion binding"/>
    <property type="evidence" value="ECO:0007669"/>
    <property type="project" value="InterPro"/>
</dbReference>
<dbReference type="GO" id="GO:0004222">
    <property type="term" value="F:metalloendopeptidase activity"/>
    <property type="evidence" value="ECO:0007669"/>
    <property type="project" value="InterPro"/>
</dbReference>
<dbReference type="GO" id="GO:0006627">
    <property type="term" value="P:protein processing involved in protein targeting to mitochondrion"/>
    <property type="evidence" value="ECO:0000318"/>
    <property type="project" value="GO_Central"/>
</dbReference>
<dbReference type="FunFam" id="3.30.830.10:FF:000023">
    <property type="entry name" value="Mitochondrial processing peptidase alpha subunit"/>
    <property type="match status" value="1"/>
</dbReference>
<dbReference type="FunFam" id="3.30.830.10:FF:000032">
    <property type="entry name" value="Mitochondrial processing peptidase, alpha subunit"/>
    <property type="match status" value="1"/>
</dbReference>
<dbReference type="Gene3D" id="3.30.830.10">
    <property type="entry name" value="Metalloenzyme, LuxS/M16 peptidase-like"/>
    <property type="match status" value="2"/>
</dbReference>
<dbReference type="InterPro" id="IPR011249">
    <property type="entry name" value="Metalloenz_LuxS/M16"/>
</dbReference>
<dbReference type="InterPro" id="IPR050361">
    <property type="entry name" value="MPP/UQCRC_Complex"/>
</dbReference>
<dbReference type="InterPro" id="IPR011765">
    <property type="entry name" value="Pept_M16_N"/>
</dbReference>
<dbReference type="InterPro" id="IPR001431">
    <property type="entry name" value="Pept_M16_Zn_BS"/>
</dbReference>
<dbReference type="InterPro" id="IPR007863">
    <property type="entry name" value="Peptidase_M16_C"/>
</dbReference>
<dbReference type="PANTHER" id="PTHR11851">
    <property type="entry name" value="METALLOPROTEASE"/>
    <property type="match status" value="1"/>
</dbReference>
<dbReference type="PANTHER" id="PTHR11851:SF49">
    <property type="entry name" value="MITOCHONDRIAL-PROCESSING PEPTIDASE SUBUNIT ALPHA"/>
    <property type="match status" value="1"/>
</dbReference>
<dbReference type="Pfam" id="PF00675">
    <property type="entry name" value="Peptidase_M16"/>
    <property type="match status" value="1"/>
</dbReference>
<dbReference type="Pfam" id="PF05193">
    <property type="entry name" value="Peptidase_M16_C"/>
    <property type="match status" value="2"/>
</dbReference>
<dbReference type="SUPFAM" id="SSF63411">
    <property type="entry name" value="LuxS/MPP-like metallohydrolase"/>
    <property type="match status" value="2"/>
</dbReference>
<dbReference type="PROSITE" id="PS00143">
    <property type="entry name" value="INSULINASE"/>
    <property type="match status" value="1"/>
</dbReference>
<name>MPPA_NEUCR</name>
<protein>
    <recommendedName>
        <fullName evidence="6">Mitochondrial-processing peptidase subunit alpha</fullName>
    </recommendedName>
    <alternativeName>
        <fullName>Alpha-MPP</fullName>
    </alternativeName>
    <alternativeName>
        <fullName evidence="7">Inactive zinc metalloprotease alpha</fullName>
    </alternativeName>
    <alternativeName>
        <fullName evidence="5">Matrix processing peptidase</fullName>
    </alternativeName>
</protein>
<accession>P23955</accession>
<accession>Q7RVH4</accession>
<proteinExistence type="evidence at protein level"/>
<reference key="1">
    <citation type="journal article" date="1990" name="J. Biol. Chem.">
        <title>Matrix processing peptidase of mitochondria. Structure-function relationships.</title>
        <authorList>
            <person name="Schneider H."/>
            <person name="Arretz M."/>
            <person name="Wachter E."/>
            <person name="Neupert W."/>
        </authorList>
    </citation>
    <scope>NUCLEOTIDE SEQUENCE [MRNA]</scope>
    <scope>PROTEIN SEQUENCE OF N-TERMINUS</scope>
</reference>
<reference key="2">
    <citation type="journal article" date="2003" name="Nature">
        <title>The genome sequence of the filamentous fungus Neurospora crassa.</title>
        <authorList>
            <person name="Galagan J.E."/>
            <person name="Calvo S.E."/>
            <person name="Borkovich K.A."/>
            <person name="Selker E.U."/>
            <person name="Read N.D."/>
            <person name="Jaffe D.B."/>
            <person name="FitzHugh W."/>
            <person name="Ma L.-J."/>
            <person name="Smirnov S."/>
            <person name="Purcell S."/>
            <person name="Rehman B."/>
            <person name="Elkins T."/>
            <person name="Engels R."/>
            <person name="Wang S."/>
            <person name="Nielsen C.B."/>
            <person name="Butler J."/>
            <person name="Endrizzi M."/>
            <person name="Qui D."/>
            <person name="Ianakiev P."/>
            <person name="Bell-Pedersen D."/>
            <person name="Nelson M.A."/>
            <person name="Werner-Washburne M."/>
            <person name="Selitrennikoff C.P."/>
            <person name="Kinsey J.A."/>
            <person name="Braun E.L."/>
            <person name="Zelter A."/>
            <person name="Schulte U."/>
            <person name="Kothe G.O."/>
            <person name="Jedd G."/>
            <person name="Mewes H.-W."/>
            <person name="Staben C."/>
            <person name="Marcotte E."/>
            <person name="Greenberg D."/>
            <person name="Roy A."/>
            <person name="Foley K."/>
            <person name="Naylor J."/>
            <person name="Stange-Thomann N."/>
            <person name="Barrett R."/>
            <person name="Gnerre S."/>
            <person name="Kamal M."/>
            <person name="Kamvysselis M."/>
            <person name="Mauceli E.W."/>
            <person name="Bielke C."/>
            <person name="Rudd S."/>
            <person name="Frishman D."/>
            <person name="Krystofova S."/>
            <person name="Rasmussen C."/>
            <person name="Metzenberg R.L."/>
            <person name="Perkins D.D."/>
            <person name="Kroken S."/>
            <person name="Cogoni C."/>
            <person name="Macino G."/>
            <person name="Catcheside D.E.A."/>
            <person name="Li W."/>
            <person name="Pratt R.J."/>
            <person name="Osmani S.A."/>
            <person name="DeSouza C.P.C."/>
            <person name="Glass N.L."/>
            <person name="Orbach M.J."/>
            <person name="Berglund J.A."/>
            <person name="Voelker R."/>
            <person name="Yarden O."/>
            <person name="Plamann M."/>
            <person name="Seiler S."/>
            <person name="Dunlap J.C."/>
            <person name="Radford A."/>
            <person name="Aramayo R."/>
            <person name="Natvig D.O."/>
            <person name="Alex L.A."/>
            <person name="Mannhaupt G."/>
            <person name="Ebbole D.J."/>
            <person name="Freitag M."/>
            <person name="Paulsen I."/>
            <person name="Sachs M.S."/>
            <person name="Lander E.S."/>
            <person name="Nusbaum C."/>
            <person name="Birren B.W."/>
        </authorList>
    </citation>
    <scope>NUCLEOTIDE SEQUENCE [LARGE SCALE GENOMIC DNA]</scope>
    <source>
        <strain>ATCC 24698 / 74-OR23-1A / CBS 708.71 / DSM 1257 / FGSC 987</strain>
    </source>
</reference>
<reference key="3">
    <citation type="journal article" date="1988" name="Cell">
        <title>Mitochondrial protein import: identification of processing peptidase and of PEP, a processing enhancing protein.</title>
        <authorList>
            <person name="Hawlitschek G."/>
            <person name="Schneider H."/>
            <person name="Schmidt B."/>
            <person name="Tropschug M."/>
            <person name="Hartl F.-U."/>
            <person name="Neupert W."/>
        </authorList>
    </citation>
    <scope>FUNCTION</scope>
    <scope>INTERACTION WITH PEP</scope>
    <scope>SUBCELLULAR LOCATION</scope>
    <source>
        <strain>ATCC 24698 / 74-OR23-1A / CBS 708.71 / DSM 1257 / FGSC 987</strain>
    </source>
</reference>
<reference key="4">
    <citation type="journal article" date="1994" name="J. Biol. Chem.">
        <title>Characterization of the mitochondrial processing peptidase of Neurospora crassa.</title>
        <authorList>
            <person name="Arretz M."/>
            <person name="Schneider H."/>
            <person name="Guiard B."/>
            <person name="Brunner M."/>
            <person name="Neupert W."/>
        </authorList>
    </citation>
    <scope>FUNCTION</scope>
</reference>
<sequence length="577" mass="63041">MLNRFRPARLVAQSSRCLPLTRARAGPLPVNNARTLATRAAAVNTKEPTERDNITTLSNGVRVASEDLPDAFSGVGVYIDAGSRYENDYVRGASHIMDRLAFKSTSTRTADEMLETVEKLGGNIQCASSRESMMYQAATFNKAIPTAVELMAETIRDPKLTDEELEGQIMTAQYEVNEIWSKAELILPELVHMAAFKDNTLGNPLLCPKERLDYINRDVIQTYRDAFYRPERLVVAFAGVPHERAVKLAEKYFGDMKASDAPGLSRTGSETSVDSLVSESSEASSESSSSSSDSSESSGGLLSKLFSPKAKKATPNPFLTRVPISTEDLTRPAHYTGGFLTLPSQPPPLNPNLPTFTHIQLAFEGLAISDDDIYALATLQTLLGGGGSFSAGGPGKGMYSRLYTNVLNQHGWVESCVAFNHSYTDSGLFGIAASCYPGRTLPMLQVMCRELHALTTDHGYSALGELEVSRAKNQLRSSLLMNLESRMVELEDLGRQVQVHGRKIPVREMTRRINELTVKDLRRVAKRVVGGMANNAGQGSGAPTVVLQEATVQGLKTTELGWDQIQDTIAQWKLGRR</sequence>
<feature type="transit peptide" description="Mitochondrion" evidence="2">
    <location>
        <begin position="1"/>
        <end position="35"/>
    </location>
</feature>
<feature type="chain" id="PRO_0000026771" description="Mitochondrial-processing peptidase subunit alpha">
    <location>
        <begin position="36"/>
        <end position="577"/>
    </location>
</feature>
<feature type="region of interest" description="Disordered" evidence="1">
    <location>
        <begin position="259"/>
        <end position="301"/>
    </location>
</feature>
<feature type="compositionally biased region" description="Low complexity" evidence="1">
    <location>
        <begin position="269"/>
        <end position="301"/>
    </location>
</feature>
<feature type="sequence conflict" description="In Ref. 1; AAA33597." evidence="7" ref="1">
    <original>T</original>
    <variation>A</variation>
    <location>
        <position position="107"/>
    </location>
</feature>
<feature type="sequence conflict" description="In Ref. 1; AA sequence." evidence="7" ref="1">
    <original>T</original>
    <variation>S</variation>
    <location>
        <position position="107"/>
    </location>
</feature>